<accession>C3P9F7</accession>
<keyword id="KW-0067">ATP-binding</keyword>
<keyword id="KW-0143">Chaperone</keyword>
<keyword id="KW-0479">Metal-binding</keyword>
<keyword id="KW-0547">Nucleotide-binding</keyword>
<keyword id="KW-0862">Zinc</keyword>
<protein>
    <recommendedName>
        <fullName evidence="1">ATP-dependent Clp protease ATP-binding subunit ClpX</fullName>
    </recommendedName>
</protein>
<evidence type="ECO:0000255" key="1">
    <source>
        <dbReference type="HAMAP-Rule" id="MF_00175"/>
    </source>
</evidence>
<evidence type="ECO:0000255" key="2">
    <source>
        <dbReference type="PROSITE-ProRule" id="PRU01250"/>
    </source>
</evidence>
<proteinExistence type="inferred from homology"/>
<name>CLPX_BACAA</name>
<comment type="function">
    <text evidence="1">ATP-dependent specificity component of the Clp protease. It directs the protease to specific substrates. Can perform chaperone functions in the absence of ClpP.</text>
</comment>
<comment type="subunit">
    <text evidence="1">Component of the ClpX-ClpP complex. Forms a hexameric ring that, in the presence of ATP, binds to fourteen ClpP subunits assembled into a disk-like structure with a central cavity, resembling the structure of eukaryotic proteasomes.</text>
</comment>
<comment type="similarity">
    <text evidence="1">Belongs to the ClpX chaperone family.</text>
</comment>
<sequence length="419" mass="46199">MFKFNDEKGQLKCSFCGKTQTQVRKLVAGPGVYICDECIELCTEIVQEELAKDEEVEFKDVPKPVEIREILDEYVIGQDNAKKALAVAVYNHYKRINSNSKIDDVELAKSNIALIGPTGSGKTLLAQTLARILNVPFAIADATSLTEAGYVGEDVENILLKLIQAADYDVEKAEKGIIYIDEIDKVARKSENPSITRDVSGEGVQQALLKILEGTVASVPPQGGRKHPHQEFIQIDTTNILFICGGAFDGIEPIIKRRLGEKVIGFGSEKKNADVNEKHVLSHVLPEDLLRFGLIPEFIGRLPVIANLEPLDEDALVDILTKPKNALVKQFQKLLELDDVELEFEEGALIEIAKKAIERKTGARGLRSIIEGLMLEVMFELPSRKDIEKCILTKETVADNAAPKLVLQDGTVLDTKTSA</sequence>
<feature type="chain" id="PRO_1000123819" description="ATP-dependent Clp protease ATP-binding subunit ClpX">
    <location>
        <begin position="1"/>
        <end position="419"/>
    </location>
</feature>
<feature type="domain" description="ClpX-type ZB" evidence="2">
    <location>
        <begin position="1"/>
        <end position="54"/>
    </location>
</feature>
<feature type="binding site" evidence="2">
    <location>
        <position position="13"/>
    </location>
    <ligand>
        <name>Zn(2+)</name>
        <dbReference type="ChEBI" id="CHEBI:29105"/>
    </ligand>
</feature>
<feature type="binding site" evidence="2">
    <location>
        <position position="16"/>
    </location>
    <ligand>
        <name>Zn(2+)</name>
        <dbReference type="ChEBI" id="CHEBI:29105"/>
    </ligand>
</feature>
<feature type="binding site" evidence="2">
    <location>
        <position position="35"/>
    </location>
    <ligand>
        <name>Zn(2+)</name>
        <dbReference type="ChEBI" id="CHEBI:29105"/>
    </ligand>
</feature>
<feature type="binding site" evidence="2">
    <location>
        <position position="38"/>
    </location>
    <ligand>
        <name>Zn(2+)</name>
        <dbReference type="ChEBI" id="CHEBI:29105"/>
    </ligand>
</feature>
<feature type="binding site" evidence="1">
    <location>
        <begin position="117"/>
        <end position="124"/>
    </location>
    <ligand>
        <name>ATP</name>
        <dbReference type="ChEBI" id="CHEBI:30616"/>
    </ligand>
</feature>
<gene>
    <name evidence="1" type="primary">clpX</name>
    <name type="ordered locus">BAA_4722</name>
</gene>
<reference key="1">
    <citation type="submission" date="2009-04" db="EMBL/GenBank/DDBJ databases">
        <title>Genome sequence of Bacillus anthracis A0248.</title>
        <authorList>
            <person name="Dodson R.J."/>
            <person name="Munk A.C."/>
            <person name="Bruce D."/>
            <person name="Detter C."/>
            <person name="Tapia R."/>
            <person name="Sutton G."/>
            <person name="Sims D."/>
            <person name="Brettin T."/>
        </authorList>
    </citation>
    <scope>NUCLEOTIDE SEQUENCE [LARGE SCALE GENOMIC DNA]</scope>
    <source>
        <strain>A0248</strain>
    </source>
</reference>
<dbReference type="EMBL" id="CP001598">
    <property type="protein sequence ID" value="ACQ46789.1"/>
    <property type="molecule type" value="Genomic_DNA"/>
</dbReference>
<dbReference type="RefSeq" id="WP_000472282.1">
    <property type="nucleotide sequence ID" value="NC_012659.1"/>
</dbReference>
<dbReference type="SMR" id="C3P9F7"/>
<dbReference type="GeneID" id="75087607"/>
<dbReference type="KEGG" id="bai:BAA_4722"/>
<dbReference type="HOGENOM" id="CLU_014218_8_2_9"/>
<dbReference type="GO" id="GO:0009376">
    <property type="term" value="C:HslUV protease complex"/>
    <property type="evidence" value="ECO:0007669"/>
    <property type="project" value="TreeGrafter"/>
</dbReference>
<dbReference type="GO" id="GO:0005524">
    <property type="term" value="F:ATP binding"/>
    <property type="evidence" value="ECO:0007669"/>
    <property type="project" value="UniProtKB-UniRule"/>
</dbReference>
<dbReference type="GO" id="GO:0016887">
    <property type="term" value="F:ATP hydrolysis activity"/>
    <property type="evidence" value="ECO:0007669"/>
    <property type="project" value="InterPro"/>
</dbReference>
<dbReference type="GO" id="GO:0140662">
    <property type="term" value="F:ATP-dependent protein folding chaperone"/>
    <property type="evidence" value="ECO:0007669"/>
    <property type="project" value="InterPro"/>
</dbReference>
<dbReference type="GO" id="GO:0046983">
    <property type="term" value="F:protein dimerization activity"/>
    <property type="evidence" value="ECO:0007669"/>
    <property type="project" value="InterPro"/>
</dbReference>
<dbReference type="GO" id="GO:0051082">
    <property type="term" value="F:unfolded protein binding"/>
    <property type="evidence" value="ECO:0007669"/>
    <property type="project" value="UniProtKB-UniRule"/>
</dbReference>
<dbReference type="GO" id="GO:0008270">
    <property type="term" value="F:zinc ion binding"/>
    <property type="evidence" value="ECO:0007669"/>
    <property type="project" value="InterPro"/>
</dbReference>
<dbReference type="GO" id="GO:0051301">
    <property type="term" value="P:cell division"/>
    <property type="evidence" value="ECO:0007669"/>
    <property type="project" value="TreeGrafter"/>
</dbReference>
<dbReference type="GO" id="GO:0051603">
    <property type="term" value="P:proteolysis involved in protein catabolic process"/>
    <property type="evidence" value="ECO:0007669"/>
    <property type="project" value="TreeGrafter"/>
</dbReference>
<dbReference type="CDD" id="cd19497">
    <property type="entry name" value="RecA-like_ClpX"/>
    <property type="match status" value="1"/>
</dbReference>
<dbReference type="FunFam" id="1.10.8.60:FF:000002">
    <property type="entry name" value="ATP-dependent Clp protease ATP-binding subunit ClpX"/>
    <property type="match status" value="1"/>
</dbReference>
<dbReference type="FunFam" id="3.40.50.300:FF:000005">
    <property type="entry name" value="ATP-dependent Clp protease ATP-binding subunit ClpX"/>
    <property type="match status" value="1"/>
</dbReference>
<dbReference type="Gene3D" id="1.10.8.60">
    <property type="match status" value="1"/>
</dbReference>
<dbReference type="Gene3D" id="6.20.220.10">
    <property type="entry name" value="ClpX chaperone, C4-type zinc finger domain"/>
    <property type="match status" value="1"/>
</dbReference>
<dbReference type="Gene3D" id="3.40.50.300">
    <property type="entry name" value="P-loop containing nucleotide triphosphate hydrolases"/>
    <property type="match status" value="1"/>
</dbReference>
<dbReference type="HAMAP" id="MF_00175">
    <property type="entry name" value="ClpX"/>
    <property type="match status" value="1"/>
</dbReference>
<dbReference type="InterPro" id="IPR003593">
    <property type="entry name" value="AAA+_ATPase"/>
</dbReference>
<dbReference type="InterPro" id="IPR050052">
    <property type="entry name" value="ATP-dep_Clp_protease_ClpX"/>
</dbReference>
<dbReference type="InterPro" id="IPR003959">
    <property type="entry name" value="ATPase_AAA_core"/>
</dbReference>
<dbReference type="InterPro" id="IPR019489">
    <property type="entry name" value="Clp_ATPase_C"/>
</dbReference>
<dbReference type="InterPro" id="IPR004487">
    <property type="entry name" value="Clp_protease_ATP-bd_su_ClpX"/>
</dbReference>
<dbReference type="InterPro" id="IPR046425">
    <property type="entry name" value="ClpX_bact"/>
</dbReference>
<dbReference type="InterPro" id="IPR027417">
    <property type="entry name" value="P-loop_NTPase"/>
</dbReference>
<dbReference type="InterPro" id="IPR010603">
    <property type="entry name" value="Znf_CppX_C4"/>
</dbReference>
<dbReference type="InterPro" id="IPR038366">
    <property type="entry name" value="Znf_CppX_C4_sf"/>
</dbReference>
<dbReference type="NCBIfam" id="TIGR00382">
    <property type="entry name" value="clpX"/>
    <property type="match status" value="1"/>
</dbReference>
<dbReference type="NCBIfam" id="NF003745">
    <property type="entry name" value="PRK05342.1"/>
    <property type="match status" value="1"/>
</dbReference>
<dbReference type="PANTHER" id="PTHR48102:SF7">
    <property type="entry name" value="ATP-DEPENDENT CLP PROTEASE ATP-BINDING SUBUNIT CLPX-LIKE, MITOCHONDRIAL"/>
    <property type="match status" value="1"/>
</dbReference>
<dbReference type="PANTHER" id="PTHR48102">
    <property type="entry name" value="ATP-DEPENDENT CLP PROTEASE ATP-BINDING SUBUNIT CLPX-LIKE, MITOCHONDRIAL-RELATED"/>
    <property type="match status" value="1"/>
</dbReference>
<dbReference type="Pfam" id="PF07724">
    <property type="entry name" value="AAA_2"/>
    <property type="match status" value="1"/>
</dbReference>
<dbReference type="Pfam" id="PF10431">
    <property type="entry name" value="ClpB_D2-small"/>
    <property type="match status" value="1"/>
</dbReference>
<dbReference type="Pfam" id="PF06689">
    <property type="entry name" value="zf-C4_ClpX"/>
    <property type="match status" value="1"/>
</dbReference>
<dbReference type="SMART" id="SM00382">
    <property type="entry name" value="AAA"/>
    <property type="match status" value="1"/>
</dbReference>
<dbReference type="SMART" id="SM01086">
    <property type="entry name" value="ClpB_D2-small"/>
    <property type="match status" value="1"/>
</dbReference>
<dbReference type="SMART" id="SM00994">
    <property type="entry name" value="zf-C4_ClpX"/>
    <property type="match status" value="1"/>
</dbReference>
<dbReference type="SUPFAM" id="SSF57716">
    <property type="entry name" value="Glucocorticoid receptor-like (DNA-binding domain)"/>
    <property type="match status" value="1"/>
</dbReference>
<dbReference type="SUPFAM" id="SSF52540">
    <property type="entry name" value="P-loop containing nucleoside triphosphate hydrolases"/>
    <property type="match status" value="1"/>
</dbReference>
<dbReference type="PROSITE" id="PS51902">
    <property type="entry name" value="CLPX_ZB"/>
    <property type="match status" value="1"/>
</dbReference>
<organism>
    <name type="scientific">Bacillus anthracis (strain A0248)</name>
    <dbReference type="NCBI Taxonomy" id="592021"/>
    <lineage>
        <taxon>Bacteria</taxon>
        <taxon>Bacillati</taxon>
        <taxon>Bacillota</taxon>
        <taxon>Bacilli</taxon>
        <taxon>Bacillales</taxon>
        <taxon>Bacillaceae</taxon>
        <taxon>Bacillus</taxon>
        <taxon>Bacillus cereus group</taxon>
    </lineage>
</organism>